<evidence type="ECO:0000255" key="1">
    <source>
        <dbReference type="HAMAP-Rule" id="MF_00087"/>
    </source>
</evidence>
<proteinExistence type="inferred from homology"/>
<name>HEM1_PARC0</name>
<reference key="1">
    <citation type="submission" date="2006-12" db="EMBL/GenBank/DDBJ databases">
        <title>Complete sequence of Acidovorax avenae subsp. citrulli AAC00-1.</title>
        <authorList>
            <person name="Copeland A."/>
            <person name="Lucas S."/>
            <person name="Lapidus A."/>
            <person name="Barry K."/>
            <person name="Detter J.C."/>
            <person name="Glavina del Rio T."/>
            <person name="Dalin E."/>
            <person name="Tice H."/>
            <person name="Pitluck S."/>
            <person name="Kiss H."/>
            <person name="Brettin T."/>
            <person name="Bruce D."/>
            <person name="Han C."/>
            <person name="Tapia R."/>
            <person name="Gilna P."/>
            <person name="Schmutz J."/>
            <person name="Larimer F."/>
            <person name="Land M."/>
            <person name="Hauser L."/>
            <person name="Kyrpides N."/>
            <person name="Kim E."/>
            <person name="Stahl D."/>
            <person name="Richardson P."/>
        </authorList>
    </citation>
    <scope>NUCLEOTIDE SEQUENCE [LARGE SCALE GENOMIC DNA]</scope>
    <source>
        <strain>AAC00-1</strain>
    </source>
</reference>
<protein>
    <recommendedName>
        <fullName evidence="1">Glutamyl-tRNA reductase</fullName>
        <shortName evidence="1">GluTR</shortName>
        <ecNumber evidence="1">1.2.1.70</ecNumber>
    </recommendedName>
</protein>
<feature type="chain" id="PRO_0000335001" description="Glutamyl-tRNA reductase">
    <location>
        <begin position="1"/>
        <end position="432"/>
    </location>
</feature>
<feature type="active site" description="Nucleophile" evidence="1">
    <location>
        <position position="56"/>
    </location>
</feature>
<feature type="binding site" evidence="1">
    <location>
        <begin position="55"/>
        <end position="58"/>
    </location>
    <ligand>
        <name>substrate</name>
    </ligand>
</feature>
<feature type="binding site" evidence="1">
    <location>
        <position position="113"/>
    </location>
    <ligand>
        <name>substrate</name>
    </ligand>
</feature>
<feature type="binding site" evidence="1">
    <location>
        <begin position="118"/>
        <end position="120"/>
    </location>
    <ligand>
        <name>substrate</name>
    </ligand>
</feature>
<feature type="binding site" evidence="1">
    <location>
        <position position="124"/>
    </location>
    <ligand>
        <name>substrate</name>
    </ligand>
</feature>
<feature type="binding site" evidence="1">
    <location>
        <begin position="193"/>
        <end position="198"/>
    </location>
    <ligand>
        <name>NADP(+)</name>
        <dbReference type="ChEBI" id="CHEBI:58349"/>
    </ligand>
</feature>
<feature type="site" description="Important for activity" evidence="1">
    <location>
        <position position="103"/>
    </location>
</feature>
<organism>
    <name type="scientific">Paracidovorax citrulli (strain AAC00-1)</name>
    <name type="common">Acidovorax citrulli</name>
    <dbReference type="NCBI Taxonomy" id="397945"/>
    <lineage>
        <taxon>Bacteria</taxon>
        <taxon>Pseudomonadati</taxon>
        <taxon>Pseudomonadota</taxon>
        <taxon>Betaproteobacteria</taxon>
        <taxon>Burkholderiales</taxon>
        <taxon>Comamonadaceae</taxon>
        <taxon>Paracidovorax</taxon>
    </lineage>
</organism>
<comment type="function">
    <text evidence="1">Catalyzes the NADPH-dependent reduction of glutamyl-tRNA(Glu) to glutamate 1-semialdehyde (GSA).</text>
</comment>
<comment type="catalytic activity">
    <reaction evidence="1">
        <text>(S)-4-amino-5-oxopentanoate + tRNA(Glu) + NADP(+) = L-glutamyl-tRNA(Glu) + NADPH + H(+)</text>
        <dbReference type="Rhea" id="RHEA:12344"/>
        <dbReference type="Rhea" id="RHEA-COMP:9663"/>
        <dbReference type="Rhea" id="RHEA-COMP:9680"/>
        <dbReference type="ChEBI" id="CHEBI:15378"/>
        <dbReference type="ChEBI" id="CHEBI:57501"/>
        <dbReference type="ChEBI" id="CHEBI:57783"/>
        <dbReference type="ChEBI" id="CHEBI:58349"/>
        <dbReference type="ChEBI" id="CHEBI:78442"/>
        <dbReference type="ChEBI" id="CHEBI:78520"/>
        <dbReference type="EC" id="1.2.1.70"/>
    </reaction>
</comment>
<comment type="pathway">
    <text evidence="1">Porphyrin-containing compound metabolism; protoporphyrin-IX biosynthesis; 5-aminolevulinate from L-glutamyl-tRNA(Glu): step 1/2.</text>
</comment>
<comment type="subunit">
    <text evidence="1">Homodimer.</text>
</comment>
<comment type="domain">
    <text evidence="1">Possesses an unusual extended V-shaped dimeric structure with each monomer consisting of three distinct domains arranged along a curved 'spinal' alpha-helix. The N-terminal catalytic domain specifically recognizes the glutamate moiety of the substrate. The second domain is the NADPH-binding domain, and the third C-terminal domain is responsible for dimerization.</text>
</comment>
<comment type="miscellaneous">
    <text evidence="1">During catalysis, the active site Cys acts as a nucleophile attacking the alpha-carbonyl group of tRNA-bound glutamate with the formation of a thioester intermediate between enzyme and glutamate, and the concomitant release of tRNA(Glu). The thioester intermediate is finally reduced by direct hydride transfer from NADPH, to form the product GSA.</text>
</comment>
<comment type="similarity">
    <text evidence="1">Belongs to the glutamyl-tRNA reductase family.</text>
</comment>
<sequence length="432" mass="46734">MAVWALGINHTTAPLDLRGRFAFAIDQIAPTLQGLRQSLGGATRHPQVETAILSTCNRTEIYCAGQQPALDHTLDWLAHSGGVSPSLLRSHSYTLEESLVARHAFRVASGLDSMVLGEAQILGQMKDAVRAAETAGALGTTLNQLFQRSFAVAKEVRTSTEIGAHSISMAAAAVRLAGQLFEDLTEIRILFVGAGEMIELAATHFAAKNPKSLAIANRTLERGEKLASRFGGEVMRLADLPDRLHEFDAVVSCTASSLPIIGLGAVERALKKRRHRPMFMVDLAVPRDIEPEVKALEDIYLYTVDDLASVVQTAQASRQAAVAQAEAIIDAGVQSFMHWMDQRSPVGGVVPLIQQIHAQADEWRALEIARAKKLIARGEDMDAVLEALSRGLTQKMLHGTLAELRAGDADTRAQTAQTVSRLFLRSQSRSGL</sequence>
<keyword id="KW-0521">NADP</keyword>
<keyword id="KW-0560">Oxidoreductase</keyword>
<keyword id="KW-0627">Porphyrin biosynthesis</keyword>
<dbReference type="EC" id="1.2.1.70" evidence="1"/>
<dbReference type="EMBL" id="CP000512">
    <property type="protein sequence ID" value="ABM34211.1"/>
    <property type="molecule type" value="Genomic_DNA"/>
</dbReference>
<dbReference type="RefSeq" id="WP_011796705.1">
    <property type="nucleotide sequence ID" value="NC_008752.1"/>
</dbReference>
<dbReference type="SMR" id="A1TTC3"/>
<dbReference type="STRING" id="397945.Aave_3663"/>
<dbReference type="GeneID" id="79791447"/>
<dbReference type="KEGG" id="aav:Aave_3663"/>
<dbReference type="eggNOG" id="COG0373">
    <property type="taxonomic scope" value="Bacteria"/>
</dbReference>
<dbReference type="HOGENOM" id="CLU_035113_2_2_4"/>
<dbReference type="OrthoDB" id="110209at2"/>
<dbReference type="UniPathway" id="UPA00251">
    <property type="reaction ID" value="UER00316"/>
</dbReference>
<dbReference type="Proteomes" id="UP000002596">
    <property type="component" value="Chromosome"/>
</dbReference>
<dbReference type="GO" id="GO:0008883">
    <property type="term" value="F:glutamyl-tRNA reductase activity"/>
    <property type="evidence" value="ECO:0007669"/>
    <property type="project" value="UniProtKB-UniRule"/>
</dbReference>
<dbReference type="GO" id="GO:0050661">
    <property type="term" value="F:NADP binding"/>
    <property type="evidence" value="ECO:0007669"/>
    <property type="project" value="InterPro"/>
</dbReference>
<dbReference type="GO" id="GO:0019353">
    <property type="term" value="P:protoporphyrinogen IX biosynthetic process from glutamate"/>
    <property type="evidence" value="ECO:0007669"/>
    <property type="project" value="TreeGrafter"/>
</dbReference>
<dbReference type="CDD" id="cd05213">
    <property type="entry name" value="NAD_bind_Glutamyl_tRNA_reduct"/>
    <property type="match status" value="1"/>
</dbReference>
<dbReference type="FunFam" id="3.30.460.30:FF:000001">
    <property type="entry name" value="Glutamyl-tRNA reductase"/>
    <property type="match status" value="1"/>
</dbReference>
<dbReference type="FunFam" id="3.40.50.720:FF:000031">
    <property type="entry name" value="Glutamyl-tRNA reductase"/>
    <property type="match status" value="1"/>
</dbReference>
<dbReference type="Gene3D" id="3.30.460.30">
    <property type="entry name" value="Glutamyl-tRNA reductase, N-terminal domain"/>
    <property type="match status" value="1"/>
</dbReference>
<dbReference type="Gene3D" id="3.40.50.720">
    <property type="entry name" value="NAD(P)-binding Rossmann-like Domain"/>
    <property type="match status" value="1"/>
</dbReference>
<dbReference type="HAMAP" id="MF_00087">
    <property type="entry name" value="Glu_tRNA_reductase"/>
    <property type="match status" value="1"/>
</dbReference>
<dbReference type="InterPro" id="IPR000343">
    <property type="entry name" value="4pyrrol_synth_GluRdtase"/>
</dbReference>
<dbReference type="InterPro" id="IPR015896">
    <property type="entry name" value="4pyrrol_synth_GluRdtase_dimer"/>
</dbReference>
<dbReference type="InterPro" id="IPR015895">
    <property type="entry name" value="4pyrrol_synth_GluRdtase_N"/>
</dbReference>
<dbReference type="InterPro" id="IPR018214">
    <property type="entry name" value="GluRdtase_CS"/>
</dbReference>
<dbReference type="InterPro" id="IPR036453">
    <property type="entry name" value="GluRdtase_dimer_dom_sf"/>
</dbReference>
<dbReference type="InterPro" id="IPR036343">
    <property type="entry name" value="GluRdtase_N_sf"/>
</dbReference>
<dbReference type="InterPro" id="IPR036291">
    <property type="entry name" value="NAD(P)-bd_dom_sf"/>
</dbReference>
<dbReference type="InterPro" id="IPR006151">
    <property type="entry name" value="Shikm_DH/Glu-tRNA_Rdtase"/>
</dbReference>
<dbReference type="NCBIfam" id="TIGR01035">
    <property type="entry name" value="hemA"/>
    <property type="match status" value="1"/>
</dbReference>
<dbReference type="PANTHER" id="PTHR43013">
    <property type="entry name" value="GLUTAMYL-TRNA REDUCTASE"/>
    <property type="match status" value="1"/>
</dbReference>
<dbReference type="PANTHER" id="PTHR43013:SF1">
    <property type="entry name" value="GLUTAMYL-TRNA REDUCTASE"/>
    <property type="match status" value="1"/>
</dbReference>
<dbReference type="Pfam" id="PF00745">
    <property type="entry name" value="GlutR_dimer"/>
    <property type="match status" value="1"/>
</dbReference>
<dbReference type="Pfam" id="PF05201">
    <property type="entry name" value="GlutR_N"/>
    <property type="match status" value="1"/>
</dbReference>
<dbReference type="Pfam" id="PF01488">
    <property type="entry name" value="Shikimate_DH"/>
    <property type="match status" value="1"/>
</dbReference>
<dbReference type="PIRSF" id="PIRSF000445">
    <property type="entry name" value="4pyrrol_synth_GluRdtase"/>
    <property type="match status" value="1"/>
</dbReference>
<dbReference type="SUPFAM" id="SSF69742">
    <property type="entry name" value="Glutamyl tRNA-reductase catalytic, N-terminal domain"/>
    <property type="match status" value="1"/>
</dbReference>
<dbReference type="SUPFAM" id="SSF69075">
    <property type="entry name" value="Glutamyl tRNA-reductase dimerization domain"/>
    <property type="match status" value="1"/>
</dbReference>
<dbReference type="SUPFAM" id="SSF51735">
    <property type="entry name" value="NAD(P)-binding Rossmann-fold domains"/>
    <property type="match status" value="1"/>
</dbReference>
<dbReference type="PROSITE" id="PS00747">
    <property type="entry name" value="GLUTR"/>
    <property type="match status" value="1"/>
</dbReference>
<accession>A1TTC3</accession>
<gene>
    <name evidence="1" type="primary">hemA</name>
    <name type="ordered locus">Aave_3663</name>
</gene>